<protein>
    <recommendedName>
        <fullName evidence="5">Ranatuerin-2AVb</fullName>
    </recommendedName>
</protein>
<accession>P86162</accession>
<evidence type="ECO:0000250" key="1">
    <source>
        <dbReference type="UniProtKB" id="P86161"/>
    </source>
</evidence>
<evidence type="ECO:0000255" key="2"/>
<evidence type="ECO:0000269" key="3">
    <source>
    </source>
</evidence>
<evidence type="ECO:0000269" key="4">
    <source>
    </source>
</evidence>
<evidence type="ECO:0000303" key="5">
    <source>
    </source>
</evidence>
<evidence type="ECO:0000303" key="6">
    <source>
    </source>
</evidence>
<evidence type="ECO:0000305" key="7"/>
<feature type="peptide" id="PRO_0000373062" description="Ranatuerin-2AVb" evidence="3">
    <location>
        <begin position="1"/>
        <end position="28"/>
    </location>
</feature>
<feature type="disulfide bond" evidence="3">
    <location>
        <begin position="23"/>
        <end position="28"/>
    </location>
</feature>
<organism>
    <name type="scientific">Rana arvalis</name>
    <name type="common">Moor frog</name>
    <dbReference type="NCBI Taxonomy" id="156871"/>
    <lineage>
        <taxon>Eukaryota</taxon>
        <taxon>Metazoa</taxon>
        <taxon>Chordata</taxon>
        <taxon>Craniata</taxon>
        <taxon>Vertebrata</taxon>
        <taxon>Euteleostomi</taxon>
        <taxon>Amphibia</taxon>
        <taxon>Batrachia</taxon>
        <taxon>Anura</taxon>
        <taxon>Neobatrachia</taxon>
        <taxon>Ranoidea</taxon>
        <taxon>Ranidae</taxon>
        <taxon>Rana</taxon>
        <taxon>Rana</taxon>
    </lineage>
</organism>
<dbReference type="SMR" id="P86162"/>
<dbReference type="GO" id="GO:0005576">
    <property type="term" value="C:extracellular region"/>
    <property type="evidence" value="ECO:0000314"/>
    <property type="project" value="UniProtKB"/>
</dbReference>
<dbReference type="GO" id="GO:0042742">
    <property type="term" value="P:defense response to bacterium"/>
    <property type="evidence" value="ECO:0007669"/>
    <property type="project" value="UniProtKB-KW"/>
</dbReference>
<dbReference type="InterPro" id="IPR012521">
    <property type="entry name" value="Antimicrobial_frog_2"/>
</dbReference>
<dbReference type="Pfam" id="PF08023">
    <property type="entry name" value="Antimicrobial_2"/>
    <property type="match status" value="1"/>
</dbReference>
<reference evidence="7" key="1">
    <citation type="journal article" date="2009" name="Rapid Commun. Mass Spectrom.">
        <title>Mass spectrometric study of peptides secreted by the skin glands of the brown frog Rana arvalis from the Moscow region.</title>
        <authorList>
            <person name="Samgina T.Y."/>
            <person name="Artemenko K.A."/>
            <person name="Gorshkov V.A."/>
            <person name="Ogourtsov S.V."/>
            <person name="Zubarev R.A."/>
            <person name="Lebedev A.T."/>
        </authorList>
    </citation>
    <scope>PROTEIN SEQUENCE</scope>
    <scope>SUBCELLULAR LOCATION</scope>
    <scope>TISSUE SPECIFICITY</scope>
    <scope>DISULFIDE BOND</scope>
    <source>
        <tissue evidence="3">Skin secretion</tissue>
    </source>
</reference>
<reference key="2">
    <citation type="journal article" date="2022" name="J. Am. Soc. Mass Spectrom.">
        <title>Mass Spectrometry Differentiation between Rana arvalis Populations Based on Their Skin Peptidome Composition.</title>
        <authorList>
            <person name="Samgina T.Y."/>
            <person name="Vasileva I.D."/>
            <person name="Trebse P."/>
            <person name="Torkar G."/>
            <person name="Surin A.K."/>
            <person name="Meng Z."/>
            <person name="Zubarev R.A."/>
            <person name="Lebedev A.T."/>
        </authorList>
    </citation>
    <scope>PROTEIN SEQUENCE</scope>
    <scope>IDENTIFICATION BY MASS SPECTROMETRY</scope>
    <scope>SUBCELLULAR LOCATION</scope>
    <scope>TISSUE SPECIFICITY</scope>
    <source>
        <tissue evidence="6">Skin secretion</tissue>
    </source>
</reference>
<keyword id="KW-0878">Amphibian defense peptide</keyword>
<keyword id="KW-0044">Antibiotic</keyword>
<keyword id="KW-0929">Antimicrobial</keyword>
<keyword id="KW-0903">Direct protein sequencing</keyword>
<keyword id="KW-1015">Disulfide bond</keyword>
<keyword id="KW-0964">Secreted</keyword>
<proteinExistence type="evidence at protein level"/>
<sequence>GLMDMVKGAAKNLFASALDTLKCKITGC</sequence>
<comment type="function">
    <text evidence="1">Has antibacterial activity.</text>
</comment>
<comment type="subcellular location">
    <subcellularLocation>
        <location evidence="3 4">Secreted</location>
    </subcellularLocation>
</comment>
<comment type="tissue specificity">
    <text evidence="3 4">Expressed by the skin glands.</text>
</comment>
<comment type="mass spectrometry"/>
<comment type="similarity">
    <text evidence="2">Belongs to the frog skin active peptide (FSAP) family. Ranatuerin subfamily.</text>
</comment>
<name>RN2VB_RANAR</name>